<comment type="function">
    <text evidence="1">Catalyzes the reversible transfer of the terminal phosphate group between ATP and AMP. Plays an important role in cellular energy homeostasis and in adenine nucleotide metabolism.</text>
</comment>
<comment type="catalytic activity">
    <reaction evidence="1">
        <text>AMP + ATP = 2 ADP</text>
        <dbReference type="Rhea" id="RHEA:12973"/>
        <dbReference type="ChEBI" id="CHEBI:30616"/>
        <dbReference type="ChEBI" id="CHEBI:456215"/>
        <dbReference type="ChEBI" id="CHEBI:456216"/>
        <dbReference type="EC" id="2.7.4.3"/>
    </reaction>
</comment>
<comment type="pathway">
    <text evidence="1">Purine metabolism; AMP biosynthesis via salvage pathway; AMP from ADP: step 1/1.</text>
</comment>
<comment type="subunit">
    <text evidence="1">Monomer.</text>
</comment>
<comment type="subcellular location">
    <subcellularLocation>
        <location evidence="1">Cytoplasm</location>
    </subcellularLocation>
</comment>
<comment type="domain">
    <text evidence="1">Consists of three domains, a large central CORE domain and two small peripheral domains, NMPbind and LID, which undergo movements during catalysis. The LID domain closes over the site of phosphoryl transfer upon ATP binding. Assembling and dissambling the active center during each catalytic cycle provides an effective means to prevent ATP hydrolysis.</text>
</comment>
<comment type="similarity">
    <text evidence="1">Belongs to the adenylate kinase family.</text>
</comment>
<sequence>MRVILLGAPGAGKGTQAQFIKEQFNIPQISTGDMLRAAVKAGTPLGLEAKKVMDAGGLVSDDIILGLVKERITENDCANGFLFDGFPRTIPQAQSLVEQGVDIDFVVEIDVDDEEIIERLSGRRVHPASGRVYHTKYNPPKVEGKDDETGDELVQRDDDQEETVRKRLEVYQAQTRPLVDFYQDLATQGESNAPRYVRVAGVGSVDDIRDRVLSALKG</sequence>
<protein>
    <recommendedName>
        <fullName evidence="1">Adenylate kinase</fullName>
        <shortName evidence="1">AK</shortName>
        <ecNumber evidence="1">2.7.4.3</ecNumber>
    </recommendedName>
    <alternativeName>
        <fullName evidence="1">ATP-AMP transphosphorylase</fullName>
    </alternativeName>
    <alternativeName>
        <fullName evidence="1">ATP:AMP phosphotransferase</fullName>
    </alternativeName>
    <alternativeName>
        <fullName evidence="1">Adenylate monophosphate kinase</fullName>
    </alternativeName>
</protein>
<keyword id="KW-0067">ATP-binding</keyword>
<keyword id="KW-0963">Cytoplasm</keyword>
<keyword id="KW-0418">Kinase</keyword>
<keyword id="KW-0545">Nucleotide biosynthesis</keyword>
<keyword id="KW-0547">Nucleotide-binding</keyword>
<keyword id="KW-1185">Reference proteome</keyword>
<keyword id="KW-0808">Transferase</keyword>
<feature type="chain" id="PRO_1000021706" description="Adenylate kinase">
    <location>
        <begin position="1"/>
        <end position="218"/>
    </location>
</feature>
<feature type="region of interest" description="NMP" evidence="1">
    <location>
        <begin position="30"/>
        <end position="59"/>
    </location>
</feature>
<feature type="region of interest" description="LID" evidence="1">
    <location>
        <begin position="122"/>
        <end position="159"/>
    </location>
</feature>
<feature type="region of interest" description="Disordered" evidence="2">
    <location>
        <begin position="139"/>
        <end position="160"/>
    </location>
</feature>
<feature type="binding site" evidence="1">
    <location>
        <begin position="10"/>
        <end position="15"/>
    </location>
    <ligand>
        <name>ATP</name>
        <dbReference type="ChEBI" id="CHEBI:30616"/>
    </ligand>
</feature>
<feature type="binding site" evidence="1">
    <location>
        <position position="31"/>
    </location>
    <ligand>
        <name>AMP</name>
        <dbReference type="ChEBI" id="CHEBI:456215"/>
    </ligand>
</feature>
<feature type="binding site" evidence="1">
    <location>
        <position position="36"/>
    </location>
    <ligand>
        <name>AMP</name>
        <dbReference type="ChEBI" id="CHEBI:456215"/>
    </ligand>
</feature>
<feature type="binding site" evidence="1">
    <location>
        <begin position="57"/>
        <end position="59"/>
    </location>
    <ligand>
        <name>AMP</name>
        <dbReference type="ChEBI" id="CHEBI:456215"/>
    </ligand>
</feature>
<feature type="binding site" evidence="1">
    <location>
        <begin position="85"/>
        <end position="88"/>
    </location>
    <ligand>
        <name>AMP</name>
        <dbReference type="ChEBI" id="CHEBI:456215"/>
    </ligand>
</feature>
<feature type="binding site" evidence="1">
    <location>
        <position position="92"/>
    </location>
    <ligand>
        <name>AMP</name>
        <dbReference type="ChEBI" id="CHEBI:456215"/>
    </ligand>
</feature>
<feature type="binding site" evidence="1">
    <location>
        <position position="123"/>
    </location>
    <ligand>
        <name>ATP</name>
        <dbReference type="ChEBI" id="CHEBI:30616"/>
    </ligand>
</feature>
<feature type="binding site" evidence="1">
    <location>
        <begin position="132"/>
        <end position="133"/>
    </location>
    <ligand>
        <name>ATP</name>
        <dbReference type="ChEBI" id="CHEBI:30616"/>
    </ligand>
</feature>
<feature type="binding site" evidence="1">
    <location>
        <position position="156"/>
    </location>
    <ligand>
        <name>AMP</name>
        <dbReference type="ChEBI" id="CHEBI:456215"/>
    </ligand>
</feature>
<feature type="binding site" evidence="1">
    <location>
        <position position="167"/>
    </location>
    <ligand>
        <name>AMP</name>
        <dbReference type="ChEBI" id="CHEBI:456215"/>
    </ligand>
</feature>
<feature type="binding site" evidence="1">
    <location>
        <position position="203"/>
    </location>
    <ligand>
        <name>ATP</name>
        <dbReference type="ChEBI" id="CHEBI:30616"/>
    </ligand>
</feature>
<accession>Q0VRB0</accession>
<gene>
    <name evidence="1" type="primary">adk</name>
    <name type="ordered locus">ABO_0840</name>
</gene>
<evidence type="ECO:0000255" key="1">
    <source>
        <dbReference type="HAMAP-Rule" id="MF_00235"/>
    </source>
</evidence>
<evidence type="ECO:0000256" key="2">
    <source>
        <dbReference type="SAM" id="MobiDB-lite"/>
    </source>
</evidence>
<reference key="1">
    <citation type="journal article" date="2006" name="Nat. Biotechnol.">
        <title>Genome sequence of the ubiquitous hydrocarbon-degrading marine bacterium Alcanivorax borkumensis.</title>
        <authorList>
            <person name="Schneiker S."/>
            <person name="Martins dos Santos V.A.P."/>
            <person name="Bartels D."/>
            <person name="Bekel T."/>
            <person name="Brecht M."/>
            <person name="Buhrmester J."/>
            <person name="Chernikova T.N."/>
            <person name="Denaro R."/>
            <person name="Ferrer M."/>
            <person name="Gertler C."/>
            <person name="Goesmann A."/>
            <person name="Golyshina O.V."/>
            <person name="Kaminski F."/>
            <person name="Khachane A.N."/>
            <person name="Lang S."/>
            <person name="Linke B."/>
            <person name="McHardy A.C."/>
            <person name="Meyer F."/>
            <person name="Nechitaylo T."/>
            <person name="Puehler A."/>
            <person name="Regenhardt D."/>
            <person name="Rupp O."/>
            <person name="Sabirova J.S."/>
            <person name="Selbitschka W."/>
            <person name="Yakimov M.M."/>
            <person name="Timmis K.N."/>
            <person name="Vorhoelter F.-J."/>
            <person name="Weidner S."/>
            <person name="Kaiser O."/>
            <person name="Golyshin P.N."/>
        </authorList>
    </citation>
    <scope>NUCLEOTIDE SEQUENCE [LARGE SCALE GENOMIC DNA]</scope>
    <source>
        <strain>ATCC 700651 / DSM 11573 / NCIMB 13689 / SK2</strain>
    </source>
</reference>
<name>KAD_ALCBS</name>
<organism>
    <name type="scientific">Alcanivorax borkumensis (strain ATCC 700651 / DSM 11573 / NCIMB 13689 / SK2)</name>
    <dbReference type="NCBI Taxonomy" id="393595"/>
    <lineage>
        <taxon>Bacteria</taxon>
        <taxon>Pseudomonadati</taxon>
        <taxon>Pseudomonadota</taxon>
        <taxon>Gammaproteobacteria</taxon>
        <taxon>Oceanospirillales</taxon>
        <taxon>Alcanivoracaceae</taxon>
        <taxon>Alcanivorax</taxon>
    </lineage>
</organism>
<proteinExistence type="inferred from homology"/>
<dbReference type="EC" id="2.7.4.3" evidence="1"/>
<dbReference type="EMBL" id="AM286690">
    <property type="protein sequence ID" value="CAL16288.1"/>
    <property type="molecule type" value="Genomic_DNA"/>
</dbReference>
<dbReference type="RefSeq" id="WP_011588124.1">
    <property type="nucleotide sequence ID" value="NC_008260.1"/>
</dbReference>
<dbReference type="SMR" id="Q0VRB0"/>
<dbReference type="STRING" id="393595.ABO_0840"/>
<dbReference type="KEGG" id="abo:ABO_0840"/>
<dbReference type="eggNOG" id="COG0563">
    <property type="taxonomic scope" value="Bacteria"/>
</dbReference>
<dbReference type="HOGENOM" id="CLU_032354_1_2_6"/>
<dbReference type="OrthoDB" id="9805030at2"/>
<dbReference type="UniPathway" id="UPA00588">
    <property type="reaction ID" value="UER00649"/>
</dbReference>
<dbReference type="Proteomes" id="UP000008871">
    <property type="component" value="Chromosome"/>
</dbReference>
<dbReference type="GO" id="GO:0005737">
    <property type="term" value="C:cytoplasm"/>
    <property type="evidence" value="ECO:0007669"/>
    <property type="project" value="UniProtKB-SubCell"/>
</dbReference>
<dbReference type="GO" id="GO:0004017">
    <property type="term" value="F:adenylate kinase activity"/>
    <property type="evidence" value="ECO:0007669"/>
    <property type="project" value="UniProtKB-UniRule"/>
</dbReference>
<dbReference type="GO" id="GO:0005524">
    <property type="term" value="F:ATP binding"/>
    <property type="evidence" value="ECO:0007669"/>
    <property type="project" value="UniProtKB-UniRule"/>
</dbReference>
<dbReference type="GO" id="GO:0044209">
    <property type="term" value="P:AMP salvage"/>
    <property type="evidence" value="ECO:0007669"/>
    <property type="project" value="UniProtKB-UniRule"/>
</dbReference>
<dbReference type="CDD" id="cd01428">
    <property type="entry name" value="ADK"/>
    <property type="match status" value="1"/>
</dbReference>
<dbReference type="FunFam" id="3.40.50.300:FF:000106">
    <property type="entry name" value="Adenylate kinase mitochondrial"/>
    <property type="match status" value="1"/>
</dbReference>
<dbReference type="Gene3D" id="3.40.50.300">
    <property type="entry name" value="P-loop containing nucleotide triphosphate hydrolases"/>
    <property type="match status" value="1"/>
</dbReference>
<dbReference type="HAMAP" id="MF_00235">
    <property type="entry name" value="Adenylate_kinase_Adk"/>
    <property type="match status" value="1"/>
</dbReference>
<dbReference type="InterPro" id="IPR006259">
    <property type="entry name" value="Adenyl_kin_sub"/>
</dbReference>
<dbReference type="InterPro" id="IPR000850">
    <property type="entry name" value="Adenylat/UMP-CMP_kin"/>
</dbReference>
<dbReference type="InterPro" id="IPR033690">
    <property type="entry name" value="Adenylat_kinase_CS"/>
</dbReference>
<dbReference type="InterPro" id="IPR007862">
    <property type="entry name" value="Adenylate_kinase_lid-dom"/>
</dbReference>
<dbReference type="InterPro" id="IPR027417">
    <property type="entry name" value="P-loop_NTPase"/>
</dbReference>
<dbReference type="NCBIfam" id="TIGR01351">
    <property type="entry name" value="adk"/>
    <property type="match status" value="1"/>
</dbReference>
<dbReference type="NCBIfam" id="NF001379">
    <property type="entry name" value="PRK00279.1-1"/>
    <property type="match status" value="1"/>
</dbReference>
<dbReference type="NCBIfam" id="NF001380">
    <property type="entry name" value="PRK00279.1-2"/>
    <property type="match status" value="1"/>
</dbReference>
<dbReference type="NCBIfam" id="NF001381">
    <property type="entry name" value="PRK00279.1-3"/>
    <property type="match status" value="1"/>
</dbReference>
<dbReference type="NCBIfam" id="NF011100">
    <property type="entry name" value="PRK14527.1"/>
    <property type="match status" value="1"/>
</dbReference>
<dbReference type="PANTHER" id="PTHR23359">
    <property type="entry name" value="NUCLEOTIDE KINASE"/>
    <property type="match status" value="1"/>
</dbReference>
<dbReference type="Pfam" id="PF00406">
    <property type="entry name" value="ADK"/>
    <property type="match status" value="1"/>
</dbReference>
<dbReference type="Pfam" id="PF05191">
    <property type="entry name" value="ADK_lid"/>
    <property type="match status" value="1"/>
</dbReference>
<dbReference type="PRINTS" id="PR00094">
    <property type="entry name" value="ADENYLTKNASE"/>
</dbReference>
<dbReference type="SUPFAM" id="SSF52540">
    <property type="entry name" value="P-loop containing nucleoside triphosphate hydrolases"/>
    <property type="match status" value="1"/>
</dbReference>
<dbReference type="PROSITE" id="PS00113">
    <property type="entry name" value="ADENYLATE_KINASE"/>
    <property type="match status" value="1"/>
</dbReference>